<dbReference type="EMBL" id="AJ010742">
    <property type="protein sequence ID" value="CAA09334.1"/>
    <property type="molecule type" value="mRNA"/>
</dbReference>
<dbReference type="PIR" id="S48170">
    <property type="entry name" value="S48170"/>
</dbReference>
<dbReference type="GO" id="GO:0030424">
    <property type="term" value="C:axon"/>
    <property type="evidence" value="ECO:0007669"/>
    <property type="project" value="TreeGrafter"/>
</dbReference>
<dbReference type="GO" id="GO:0005615">
    <property type="term" value="C:extracellular space"/>
    <property type="evidence" value="ECO:0007669"/>
    <property type="project" value="TreeGrafter"/>
</dbReference>
<dbReference type="GO" id="GO:0005184">
    <property type="term" value="F:neuropeptide hormone activity"/>
    <property type="evidence" value="ECO:0007669"/>
    <property type="project" value="InterPro"/>
</dbReference>
<dbReference type="GO" id="GO:0007586">
    <property type="term" value="P:digestion"/>
    <property type="evidence" value="ECO:0007669"/>
    <property type="project" value="InterPro"/>
</dbReference>
<dbReference type="InterPro" id="IPR015499">
    <property type="entry name" value="CCK-like"/>
</dbReference>
<dbReference type="InterPro" id="IPR001651">
    <property type="entry name" value="Gastrin/CCK"/>
</dbReference>
<dbReference type="InterPro" id="IPR013152">
    <property type="entry name" value="Gastrin/cholecystokinin_CS"/>
</dbReference>
<dbReference type="PANTHER" id="PTHR10786">
    <property type="entry name" value="CHOLECYSTOKININ"/>
    <property type="match status" value="1"/>
</dbReference>
<dbReference type="PANTHER" id="PTHR10786:SF0">
    <property type="entry name" value="CHOLECYSTOKININ"/>
    <property type="match status" value="1"/>
</dbReference>
<dbReference type="Pfam" id="PF00918">
    <property type="entry name" value="Gastrin"/>
    <property type="match status" value="1"/>
</dbReference>
<dbReference type="SMART" id="SM00029">
    <property type="entry name" value="GASTRIN"/>
    <property type="match status" value="1"/>
</dbReference>
<dbReference type="PROSITE" id="PS00259">
    <property type="entry name" value="GASTRIN"/>
    <property type="match status" value="1"/>
</dbReference>
<keyword id="KW-0027">Amidation</keyword>
<keyword id="KW-0165">Cleavage on pair of basic residues</keyword>
<keyword id="KW-0903">Direct protein sequencing</keyword>
<keyword id="KW-0372">Hormone</keyword>
<keyword id="KW-0964">Secreted</keyword>
<keyword id="KW-0732">Signal</keyword>
<keyword id="KW-0765">Sulfation</keyword>
<reference key="1">
    <citation type="journal article" date="1999" name="Biochim. Biophys. Acta">
        <title>Identification and expression of gastrin and cholecystokinin mRNAs from the turtle, Pseudemys scripta: evidence of tissue-specific tyrosyl sulfation.</title>
        <authorList>
            <person name="Joenson L."/>
            <person name="Bundgaard J.R."/>
            <person name="Johnsen A.H."/>
            <person name="Rourke I.J."/>
        </authorList>
    </citation>
    <scope>NUCLEOTIDE SEQUENCE [MRNA]</scope>
    <scope>TISSUE SPECIFICITY</scope>
    <source>
        <tissue>Brain</tissue>
    </source>
</reference>
<reference key="2">
    <citation type="journal article" date="1994" name="Eur. J. Biochem.">
        <title>Identification of cholecystokinin from frog and turtle. Divergence of cholecystokinin and gastrin occurred before the evolution of amphibia.</title>
        <authorList>
            <person name="Johnsen A.H."/>
        </authorList>
    </citation>
    <scope>PROTEIN SEQUENCE OF 49-118</scope>
    <scope>SULFATION AT TYR-112</scope>
    <scope>AMIDATION AT PHE-118</scope>
    <source>
        <tissue>Brain</tissue>
        <tissue>Small intestine</tissue>
    </source>
</reference>
<evidence type="ECO:0000250" key="1"/>
<evidence type="ECO:0000255" key="2"/>
<evidence type="ECO:0000269" key="3">
    <source>
    </source>
</evidence>
<evidence type="ECO:0000269" key="4">
    <source>
    </source>
</evidence>
<evidence type="ECO:0000305" key="5"/>
<proteinExistence type="evidence at protein level"/>
<comment type="function">
    <text>This peptide hormone induces gall bladder contraction and the release of pancreatic enzymes in the gut. Its function in the brain is not clear.</text>
</comment>
<comment type="subcellular location">
    <subcellularLocation>
        <location>Secreted</location>
    </subcellularLocation>
</comment>
<comment type="tissue specificity">
    <text evidence="3">Expressed in brain, duodenum and small intestine.</text>
</comment>
<comment type="PTM">
    <text evidence="1">The precursor is cleaved by proteases to produce a number of active cholecystokinins.</text>
</comment>
<comment type="miscellaneous">
    <text>Turtle brain contains CCK-octapeptide (CCK8) and CCK7, whereas the gut contains intact CCK33, CCK40 and CCK58.</text>
</comment>
<comment type="similarity">
    <text evidence="5">Belongs to the gastrin/cholecystokinin family.</text>
</comment>
<protein>
    <recommendedName>
        <fullName>Cholecystokinin</fullName>
        <shortName>CCK</shortName>
    </recommendedName>
    <component>
        <recommendedName>
            <fullName>Cholecystokinin-58</fullName>
            <shortName>CCK58</shortName>
        </recommendedName>
    </component>
    <component>
        <recommendedName>
            <fullName>Cholecystokinin-40</fullName>
            <shortName>CCK40</shortName>
        </recommendedName>
    </component>
    <component>
        <recommendedName>
            <fullName>Cholecystokinin-33</fullName>
            <shortName>CCK33</shortName>
        </recommendedName>
    </component>
    <component>
        <recommendedName>
            <fullName>Cholecystokinin-8</fullName>
            <shortName>CCK8</shortName>
        </recommendedName>
    </component>
    <component>
        <recommendedName>
            <fullName>Cholecystokinin-7</fullName>
            <shortName>CCK7</shortName>
        </recommendedName>
    </component>
</protein>
<accession>P80345</accession>
<accession>O93608</accession>
<organism>
    <name type="scientific">Trachemys scripta</name>
    <name type="common">Red-eared slider turtle</name>
    <name type="synonym">Pseudemys scripta</name>
    <dbReference type="NCBI Taxonomy" id="34903"/>
    <lineage>
        <taxon>Eukaryota</taxon>
        <taxon>Metazoa</taxon>
        <taxon>Chordata</taxon>
        <taxon>Craniata</taxon>
        <taxon>Vertebrata</taxon>
        <taxon>Euteleostomi</taxon>
        <taxon>Archelosauria</taxon>
        <taxon>Testudinata</taxon>
        <taxon>Testudines</taxon>
        <taxon>Cryptodira</taxon>
        <taxon>Durocryptodira</taxon>
        <taxon>Testudinoidea</taxon>
        <taxon>Emydidae</taxon>
        <taxon>Trachemys</taxon>
    </lineage>
</organism>
<sequence length="130" mass="14603">MYSGICIYMFLAMLSTSSSGQQATGSHNENPVATELEQSLTEHHRHVRVPSSAGQLKPIQRLDGNVDQKANIGALLAKYLQQARKGPTGRISMMGNRVQNIDPTHRINDRDYMGWMDFGRRSAEEYEYSS</sequence>
<name>CCKN_TRASC</name>
<feature type="signal peptide" evidence="2">
    <location>
        <begin position="1"/>
        <end position="20"/>
    </location>
</feature>
<feature type="chain" id="PRO_0000010595" description="Cholecystokinin">
    <location>
        <begin position="21"/>
        <end position="130"/>
    </location>
</feature>
<feature type="propeptide" id="PRO_0000010596">
    <location>
        <begin position="21"/>
        <end position="60"/>
    </location>
</feature>
<feature type="peptide" id="PRO_0000010597" description="Cholecystokinin-58">
    <location>
        <begin position="61"/>
        <end position="118"/>
    </location>
</feature>
<feature type="peptide" id="PRO_0000010598" description="Cholecystokinin-40">
    <location>
        <begin position="79"/>
        <end position="118"/>
    </location>
</feature>
<feature type="peptide" id="PRO_0000010599" description="Cholecystokinin-33">
    <location>
        <begin position="86"/>
        <end position="118"/>
    </location>
</feature>
<feature type="peptide" id="PRO_0000010600" description="Cholecystokinin-8">
    <location>
        <begin position="111"/>
        <end position="118"/>
    </location>
</feature>
<feature type="peptide" id="PRO_0000010601" description="Cholecystokinin-7">
    <location>
        <begin position="112"/>
        <end position="118"/>
    </location>
</feature>
<feature type="propeptide" id="PRO_0000010602">
    <location>
        <begin position="122"/>
        <end position="130"/>
    </location>
</feature>
<feature type="modified residue" description="Sulfotyrosine" evidence="4">
    <location>
        <position position="112"/>
    </location>
</feature>
<feature type="modified residue" description="Phenylalanine amide" evidence="4">
    <location>
        <position position="118"/>
    </location>
</feature>
<feature type="modified residue" description="Sulfotyrosine" evidence="1">
    <location>
        <position position="126"/>
    </location>
</feature>
<feature type="modified residue" description="Sulfotyrosine" evidence="1">
    <location>
        <position position="128"/>
    </location>
</feature>